<reference key="1">
    <citation type="submission" date="2007-07" db="EMBL/GenBank/DDBJ databases">
        <title>Complete sequence of chromosome of Shewanella baltica OS185.</title>
        <authorList>
            <consortium name="US DOE Joint Genome Institute"/>
            <person name="Copeland A."/>
            <person name="Lucas S."/>
            <person name="Lapidus A."/>
            <person name="Barry K."/>
            <person name="Glavina del Rio T."/>
            <person name="Dalin E."/>
            <person name="Tice H."/>
            <person name="Pitluck S."/>
            <person name="Sims D."/>
            <person name="Brettin T."/>
            <person name="Bruce D."/>
            <person name="Detter J.C."/>
            <person name="Han C."/>
            <person name="Schmutz J."/>
            <person name="Larimer F."/>
            <person name="Land M."/>
            <person name="Hauser L."/>
            <person name="Kyrpides N."/>
            <person name="Mikhailova N."/>
            <person name="Brettar I."/>
            <person name="Rodrigues J."/>
            <person name="Konstantinidis K."/>
            <person name="Tiedje J."/>
            <person name="Richardson P."/>
        </authorList>
    </citation>
    <scope>NUCLEOTIDE SEQUENCE [LARGE SCALE GENOMIC DNA]</scope>
    <source>
        <strain>OS185</strain>
    </source>
</reference>
<keyword id="KW-0489">Methyltransferase</keyword>
<keyword id="KW-0949">S-adenosyl-L-methionine</keyword>
<keyword id="KW-0808">Transferase</keyword>
<keyword id="KW-0819">tRNA processing</keyword>
<comment type="function">
    <text evidence="1">Dual-specificity methyltransferase that catalyzes the formation of 5-methyluridine at position 54 (m5U54) in all tRNAs, and that of position 341 (m5U341) in tmRNA (transfer-mRNA).</text>
</comment>
<comment type="catalytic activity">
    <reaction evidence="1">
        <text>uridine(54) in tRNA + S-adenosyl-L-methionine = 5-methyluridine(54) in tRNA + S-adenosyl-L-homocysteine + H(+)</text>
        <dbReference type="Rhea" id="RHEA:42712"/>
        <dbReference type="Rhea" id="RHEA-COMP:10167"/>
        <dbReference type="Rhea" id="RHEA-COMP:10193"/>
        <dbReference type="ChEBI" id="CHEBI:15378"/>
        <dbReference type="ChEBI" id="CHEBI:57856"/>
        <dbReference type="ChEBI" id="CHEBI:59789"/>
        <dbReference type="ChEBI" id="CHEBI:65315"/>
        <dbReference type="ChEBI" id="CHEBI:74447"/>
        <dbReference type="EC" id="2.1.1.35"/>
    </reaction>
</comment>
<comment type="catalytic activity">
    <reaction evidence="1">
        <text>uridine(341) in tmRNA + S-adenosyl-L-methionine = 5-methyluridine(341) in tmRNA + S-adenosyl-L-homocysteine + H(+)</text>
        <dbReference type="Rhea" id="RHEA:43612"/>
        <dbReference type="Rhea" id="RHEA-COMP:10630"/>
        <dbReference type="Rhea" id="RHEA-COMP:10631"/>
        <dbReference type="ChEBI" id="CHEBI:15378"/>
        <dbReference type="ChEBI" id="CHEBI:57856"/>
        <dbReference type="ChEBI" id="CHEBI:59789"/>
        <dbReference type="ChEBI" id="CHEBI:65315"/>
        <dbReference type="ChEBI" id="CHEBI:74447"/>
    </reaction>
</comment>
<comment type="similarity">
    <text evidence="1">Belongs to the class I-like SAM-binding methyltransferase superfamily. RNA M5U methyltransferase family. TrmA subfamily.</text>
</comment>
<dbReference type="EC" id="2.1.1.-" evidence="1"/>
<dbReference type="EC" id="2.1.1.35" evidence="1"/>
<dbReference type="EMBL" id="CP000753">
    <property type="protein sequence ID" value="ABS06347.1"/>
    <property type="molecule type" value="Genomic_DNA"/>
</dbReference>
<dbReference type="RefSeq" id="WP_011982110.1">
    <property type="nucleotide sequence ID" value="NC_009665.1"/>
</dbReference>
<dbReference type="SMR" id="A6WHQ8"/>
<dbReference type="KEGG" id="sbm:Shew185_0176"/>
<dbReference type="HOGENOM" id="CLU_043022_0_0_6"/>
<dbReference type="GO" id="GO:0005829">
    <property type="term" value="C:cytosol"/>
    <property type="evidence" value="ECO:0007669"/>
    <property type="project" value="TreeGrafter"/>
</dbReference>
<dbReference type="GO" id="GO:0019843">
    <property type="term" value="F:rRNA binding"/>
    <property type="evidence" value="ECO:0007669"/>
    <property type="project" value="TreeGrafter"/>
</dbReference>
<dbReference type="GO" id="GO:0030697">
    <property type="term" value="F:tRNA (uracil(54)-C5)-methyltransferase activity, S-adenosyl methionine-dependent"/>
    <property type="evidence" value="ECO:0007669"/>
    <property type="project" value="UniProtKB-UniRule"/>
</dbReference>
<dbReference type="GO" id="GO:0000049">
    <property type="term" value="F:tRNA binding"/>
    <property type="evidence" value="ECO:0007669"/>
    <property type="project" value="TreeGrafter"/>
</dbReference>
<dbReference type="GO" id="GO:0030488">
    <property type="term" value="P:tRNA methylation"/>
    <property type="evidence" value="ECO:0007669"/>
    <property type="project" value="UniProtKB-UniRule"/>
</dbReference>
<dbReference type="CDD" id="cd02440">
    <property type="entry name" value="AdoMet_MTases"/>
    <property type="match status" value="1"/>
</dbReference>
<dbReference type="FunFam" id="2.40.50.1070:FF:000001">
    <property type="entry name" value="tRNA/tmRNA (uracil-C(5))-methyltransferase"/>
    <property type="match status" value="1"/>
</dbReference>
<dbReference type="FunFam" id="3.40.50.150:FF:000012">
    <property type="entry name" value="tRNA/tmRNA (uracil-C(5))-methyltransferase"/>
    <property type="match status" value="1"/>
</dbReference>
<dbReference type="Gene3D" id="2.40.50.1070">
    <property type="match status" value="1"/>
</dbReference>
<dbReference type="Gene3D" id="3.40.50.150">
    <property type="entry name" value="Vaccinia Virus protein VP39"/>
    <property type="match status" value="1"/>
</dbReference>
<dbReference type="HAMAP" id="MF_01011">
    <property type="entry name" value="RNA_methyltr_TrmA"/>
    <property type="match status" value="1"/>
</dbReference>
<dbReference type="InterPro" id="IPR030390">
    <property type="entry name" value="MeTrfase_TrmA_AS"/>
</dbReference>
<dbReference type="InterPro" id="IPR030391">
    <property type="entry name" value="MeTrfase_TrmA_CS"/>
</dbReference>
<dbReference type="InterPro" id="IPR029063">
    <property type="entry name" value="SAM-dependent_MTases_sf"/>
</dbReference>
<dbReference type="InterPro" id="IPR011869">
    <property type="entry name" value="TrmA_MeTrfase"/>
</dbReference>
<dbReference type="InterPro" id="IPR010280">
    <property type="entry name" value="U5_MeTrfase_fam"/>
</dbReference>
<dbReference type="NCBIfam" id="TIGR02143">
    <property type="entry name" value="trmA_only"/>
    <property type="match status" value="1"/>
</dbReference>
<dbReference type="PANTHER" id="PTHR47790">
    <property type="entry name" value="TRNA/TMRNA (URACIL-C(5))-METHYLTRANSFERASE"/>
    <property type="match status" value="1"/>
</dbReference>
<dbReference type="PANTHER" id="PTHR47790:SF2">
    <property type="entry name" value="TRNA_TMRNA (URACIL-C(5))-METHYLTRANSFERASE"/>
    <property type="match status" value="1"/>
</dbReference>
<dbReference type="Pfam" id="PF05958">
    <property type="entry name" value="tRNA_U5-meth_tr"/>
    <property type="match status" value="1"/>
</dbReference>
<dbReference type="SUPFAM" id="SSF53335">
    <property type="entry name" value="S-adenosyl-L-methionine-dependent methyltransferases"/>
    <property type="match status" value="1"/>
</dbReference>
<dbReference type="PROSITE" id="PS51687">
    <property type="entry name" value="SAM_MT_RNA_M5U"/>
    <property type="match status" value="1"/>
</dbReference>
<dbReference type="PROSITE" id="PS01230">
    <property type="entry name" value="TRMA_1"/>
    <property type="match status" value="1"/>
</dbReference>
<dbReference type="PROSITE" id="PS01231">
    <property type="entry name" value="TRMA_2"/>
    <property type="match status" value="1"/>
</dbReference>
<organism>
    <name type="scientific">Shewanella baltica (strain OS185)</name>
    <dbReference type="NCBI Taxonomy" id="402882"/>
    <lineage>
        <taxon>Bacteria</taxon>
        <taxon>Pseudomonadati</taxon>
        <taxon>Pseudomonadota</taxon>
        <taxon>Gammaproteobacteria</taxon>
        <taxon>Alteromonadales</taxon>
        <taxon>Shewanellaceae</taxon>
        <taxon>Shewanella</taxon>
    </lineage>
</organism>
<feature type="chain" id="PRO_1000072913" description="tRNA/tmRNA (uracil-C(5))-methyltransferase">
    <location>
        <begin position="1"/>
        <end position="365"/>
    </location>
</feature>
<feature type="active site" description="Nucleophile" evidence="1">
    <location>
        <position position="323"/>
    </location>
</feature>
<feature type="active site" description="Proton acceptor" evidence="1">
    <location>
        <position position="357"/>
    </location>
</feature>
<feature type="binding site" evidence="1">
    <location>
        <position position="189"/>
    </location>
    <ligand>
        <name>S-adenosyl-L-methionine</name>
        <dbReference type="ChEBI" id="CHEBI:59789"/>
    </ligand>
</feature>
<feature type="binding site" evidence="1">
    <location>
        <position position="217"/>
    </location>
    <ligand>
        <name>S-adenosyl-L-methionine</name>
        <dbReference type="ChEBI" id="CHEBI:59789"/>
    </ligand>
</feature>
<feature type="binding site" evidence="1">
    <location>
        <position position="222"/>
    </location>
    <ligand>
        <name>S-adenosyl-L-methionine</name>
        <dbReference type="ChEBI" id="CHEBI:59789"/>
    </ligand>
</feature>
<feature type="binding site" evidence="1">
    <location>
        <position position="238"/>
    </location>
    <ligand>
        <name>S-adenosyl-L-methionine</name>
        <dbReference type="ChEBI" id="CHEBI:59789"/>
    </ligand>
</feature>
<feature type="binding site" evidence="1">
    <location>
        <position position="298"/>
    </location>
    <ligand>
        <name>S-adenosyl-L-methionine</name>
        <dbReference type="ChEBI" id="CHEBI:59789"/>
    </ligand>
</feature>
<accession>A6WHQ8</accession>
<sequence>MNLAAMDPQTYDTQLEHKRIKLEQAFAQFETPSVEVFASEPANYRMRAEFRMWHDGDDLYYYMFDKVLNEKVRCDQYLPASVLINQMMSALIAELKPNPSLRHKLFQVDFLSTLSGEILVSLLYHRQLDDQWRADAAALKTKLSSQFNVNIIGRARKQKIDLDKDFVVESLQVNDKTFLYKQIENSFTQPNAKVSVKMLEWAIDATQDSEGDLLELYCGNGNFSIALAQNFNRVLATELAKPSVDAAQYNIEVNGIENLQIIRMSAEDFSDAMAKKRSFRRLEGIDLDSYVCNTIFVDPPRAGIDPDTLALVQGYERILYISCNPETLKDNLQLLNETHKVTRFALFDQFPYTEHMETGVLLERR</sequence>
<name>TRMA_SHEB8</name>
<proteinExistence type="inferred from homology"/>
<gene>
    <name evidence="1" type="primary">trmA</name>
    <name type="ordered locus">Shew185_0176</name>
</gene>
<evidence type="ECO:0000255" key="1">
    <source>
        <dbReference type="HAMAP-Rule" id="MF_01011"/>
    </source>
</evidence>
<protein>
    <recommendedName>
        <fullName evidence="1">tRNA/tmRNA (uracil-C(5))-methyltransferase</fullName>
        <ecNumber evidence="1">2.1.1.-</ecNumber>
        <ecNumber evidence="1">2.1.1.35</ecNumber>
    </recommendedName>
    <alternativeName>
        <fullName evidence="1">tRNA (uracil(54)-C(5))-methyltransferase</fullName>
    </alternativeName>
    <alternativeName>
        <fullName evidence="1">tRNA(m5U54)-methyltransferase</fullName>
        <shortName evidence="1">RUMT</shortName>
    </alternativeName>
    <alternativeName>
        <fullName evidence="1">tmRNA (uracil(341)-C(5))-methyltransferase</fullName>
    </alternativeName>
</protein>